<protein>
    <recommendedName>
        <fullName evidence="1">Chaperone protein DnaJ</fullName>
    </recommendedName>
</protein>
<dbReference type="EMBL" id="CP000800">
    <property type="protein sequence ID" value="ABV18170.1"/>
    <property type="molecule type" value="Genomic_DNA"/>
</dbReference>
<dbReference type="RefSeq" id="WP_001118464.1">
    <property type="nucleotide sequence ID" value="NC_009801.1"/>
</dbReference>
<dbReference type="BMRB" id="A7ZHA5"/>
<dbReference type="SMR" id="A7ZHA5"/>
<dbReference type="GeneID" id="93777428"/>
<dbReference type="KEGG" id="ecw:EcE24377A_0015"/>
<dbReference type="HOGENOM" id="CLU_017633_0_7_6"/>
<dbReference type="Proteomes" id="UP000001122">
    <property type="component" value="Chromosome"/>
</dbReference>
<dbReference type="GO" id="GO:0005737">
    <property type="term" value="C:cytoplasm"/>
    <property type="evidence" value="ECO:0007669"/>
    <property type="project" value="UniProtKB-SubCell"/>
</dbReference>
<dbReference type="GO" id="GO:0005524">
    <property type="term" value="F:ATP binding"/>
    <property type="evidence" value="ECO:0007669"/>
    <property type="project" value="InterPro"/>
</dbReference>
<dbReference type="GO" id="GO:0031072">
    <property type="term" value="F:heat shock protein binding"/>
    <property type="evidence" value="ECO:0007669"/>
    <property type="project" value="InterPro"/>
</dbReference>
<dbReference type="GO" id="GO:0051082">
    <property type="term" value="F:unfolded protein binding"/>
    <property type="evidence" value="ECO:0007669"/>
    <property type="project" value="UniProtKB-UniRule"/>
</dbReference>
<dbReference type="GO" id="GO:0008270">
    <property type="term" value="F:zinc ion binding"/>
    <property type="evidence" value="ECO:0007669"/>
    <property type="project" value="UniProtKB-UniRule"/>
</dbReference>
<dbReference type="GO" id="GO:0051085">
    <property type="term" value="P:chaperone cofactor-dependent protein refolding"/>
    <property type="evidence" value="ECO:0007669"/>
    <property type="project" value="TreeGrafter"/>
</dbReference>
<dbReference type="GO" id="GO:0006260">
    <property type="term" value="P:DNA replication"/>
    <property type="evidence" value="ECO:0007669"/>
    <property type="project" value="UniProtKB-KW"/>
</dbReference>
<dbReference type="GO" id="GO:0042026">
    <property type="term" value="P:protein refolding"/>
    <property type="evidence" value="ECO:0007669"/>
    <property type="project" value="TreeGrafter"/>
</dbReference>
<dbReference type="GO" id="GO:0009408">
    <property type="term" value="P:response to heat"/>
    <property type="evidence" value="ECO:0007669"/>
    <property type="project" value="InterPro"/>
</dbReference>
<dbReference type="CDD" id="cd06257">
    <property type="entry name" value="DnaJ"/>
    <property type="match status" value="1"/>
</dbReference>
<dbReference type="CDD" id="cd10747">
    <property type="entry name" value="DnaJ_C"/>
    <property type="match status" value="1"/>
</dbReference>
<dbReference type="CDD" id="cd10719">
    <property type="entry name" value="DnaJ_zf"/>
    <property type="match status" value="1"/>
</dbReference>
<dbReference type="FunFam" id="1.10.287.110:FF:000003">
    <property type="entry name" value="Molecular chaperone DnaJ"/>
    <property type="match status" value="1"/>
</dbReference>
<dbReference type="FunFam" id="2.10.230.10:FF:000002">
    <property type="entry name" value="Molecular chaperone DnaJ"/>
    <property type="match status" value="1"/>
</dbReference>
<dbReference type="FunFam" id="2.60.260.20:FF:000004">
    <property type="entry name" value="Molecular chaperone DnaJ"/>
    <property type="match status" value="1"/>
</dbReference>
<dbReference type="Gene3D" id="1.10.287.110">
    <property type="entry name" value="DnaJ domain"/>
    <property type="match status" value="1"/>
</dbReference>
<dbReference type="Gene3D" id="2.10.230.10">
    <property type="entry name" value="Heat shock protein DnaJ, cysteine-rich domain"/>
    <property type="match status" value="1"/>
</dbReference>
<dbReference type="Gene3D" id="2.60.260.20">
    <property type="entry name" value="Urease metallochaperone UreE, N-terminal domain"/>
    <property type="match status" value="2"/>
</dbReference>
<dbReference type="HAMAP" id="MF_01152">
    <property type="entry name" value="DnaJ"/>
    <property type="match status" value="1"/>
</dbReference>
<dbReference type="InterPro" id="IPR012724">
    <property type="entry name" value="DnaJ"/>
</dbReference>
<dbReference type="InterPro" id="IPR002939">
    <property type="entry name" value="DnaJ_C"/>
</dbReference>
<dbReference type="InterPro" id="IPR001623">
    <property type="entry name" value="DnaJ_domain"/>
</dbReference>
<dbReference type="InterPro" id="IPR018253">
    <property type="entry name" value="DnaJ_domain_CS"/>
</dbReference>
<dbReference type="InterPro" id="IPR008971">
    <property type="entry name" value="HSP40/DnaJ_pept-bd"/>
</dbReference>
<dbReference type="InterPro" id="IPR001305">
    <property type="entry name" value="HSP_DnaJ_Cys-rich_dom"/>
</dbReference>
<dbReference type="InterPro" id="IPR036410">
    <property type="entry name" value="HSP_DnaJ_Cys-rich_dom_sf"/>
</dbReference>
<dbReference type="InterPro" id="IPR036869">
    <property type="entry name" value="J_dom_sf"/>
</dbReference>
<dbReference type="NCBIfam" id="TIGR02349">
    <property type="entry name" value="DnaJ_bact"/>
    <property type="match status" value="1"/>
</dbReference>
<dbReference type="NCBIfam" id="NF008035">
    <property type="entry name" value="PRK10767.1"/>
    <property type="match status" value="1"/>
</dbReference>
<dbReference type="PANTHER" id="PTHR43096:SF48">
    <property type="entry name" value="CHAPERONE PROTEIN DNAJ"/>
    <property type="match status" value="1"/>
</dbReference>
<dbReference type="PANTHER" id="PTHR43096">
    <property type="entry name" value="DNAJ HOMOLOG 1, MITOCHONDRIAL-RELATED"/>
    <property type="match status" value="1"/>
</dbReference>
<dbReference type="Pfam" id="PF00226">
    <property type="entry name" value="DnaJ"/>
    <property type="match status" value="1"/>
</dbReference>
<dbReference type="Pfam" id="PF01556">
    <property type="entry name" value="DnaJ_C"/>
    <property type="match status" value="1"/>
</dbReference>
<dbReference type="Pfam" id="PF00684">
    <property type="entry name" value="DnaJ_CXXCXGXG"/>
    <property type="match status" value="1"/>
</dbReference>
<dbReference type="PRINTS" id="PR00625">
    <property type="entry name" value="JDOMAIN"/>
</dbReference>
<dbReference type="SMART" id="SM00271">
    <property type="entry name" value="DnaJ"/>
    <property type="match status" value="1"/>
</dbReference>
<dbReference type="SUPFAM" id="SSF46565">
    <property type="entry name" value="Chaperone J-domain"/>
    <property type="match status" value="1"/>
</dbReference>
<dbReference type="SUPFAM" id="SSF57938">
    <property type="entry name" value="DnaJ/Hsp40 cysteine-rich domain"/>
    <property type="match status" value="1"/>
</dbReference>
<dbReference type="SUPFAM" id="SSF49493">
    <property type="entry name" value="HSP40/DnaJ peptide-binding domain"/>
    <property type="match status" value="2"/>
</dbReference>
<dbReference type="PROSITE" id="PS00636">
    <property type="entry name" value="DNAJ_1"/>
    <property type="match status" value="1"/>
</dbReference>
<dbReference type="PROSITE" id="PS50076">
    <property type="entry name" value="DNAJ_2"/>
    <property type="match status" value="1"/>
</dbReference>
<dbReference type="PROSITE" id="PS51188">
    <property type="entry name" value="ZF_CR"/>
    <property type="match status" value="1"/>
</dbReference>
<sequence length="376" mass="41044">MAKQDYYEILGVSKTAEEREIKKAYKRLAMKYHPDRNQGDKEAEAKFKEIKEAYEVLTDSQKRAAYDQYGHAAFEQGGMGGGGFGGGADFSDIFGDVFGDIFGGGRGRQRAARGADLRYNMELTLEEAVRGVTKEIRIPTLEECDVCHGSGAKPGTQPQTCPTCHGSGQVQMRQGFFAVQQTCPHCQGRGTLIKDPCNKCHGHGRVERSKTLSVKIPAGVDTGDRIRLAGEGEAGEHGAPAGDLYVQVQVKQHPIFEREGNNLYCEVPINFAMAALGGEIEVPTLDGRVKLKVPGETQTGKLFRMRGKGVKSVRGGAQGDLLCRVVVETPVGLNEKQKQLLQELQESFGGPTGEHNSPRSKSFFDGVKKFFDDLTR</sequence>
<reference key="1">
    <citation type="journal article" date="2008" name="J. Bacteriol.">
        <title>The pangenome structure of Escherichia coli: comparative genomic analysis of E. coli commensal and pathogenic isolates.</title>
        <authorList>
            <person name="Rasko D.A."/>
            <person name="Rosovitz M.J."/>
            <person name="Myers G.S.A."/>
            <person name="Mongodin E.F."/>
            <person name="Fricke W.F."/>
            <person name="Gajer P."/>
            <person name="Crabtree J."/>
            <person name="Sebaihia M."/>
            <person name="Thomson N.R."/>
            <person name="Chaudhuri R."/>
            <person name="Henderson I.R."/>
            <person name="Sperandio V."/>
            <person name="Ravel J."/>
        </authorList>
    </citation>
    <scope>NUCLEOTIDE SEQUENCE [LARGE SCALE GENOMIC DNA]</scope>
    <source>
        <strain>E24377A / ETEC</strain>
    </source>
</reference>
<name>DNAJ_ECO24</name>
<comment type="function">
    <text evidence="1">Participates actively in the response to hyperosmotic and heat shock by preventing the aggregation of stress-denatured proteins and by disaggregating proteins, also in an autonomous, DnaK-independent fashion. Unfolded proteins bind initially to DnaJ; upon interaction with the DnaJ-bound protein, DnaK hydrolyzes its bound ATP, resulting in the formation of a stable complex. GrpE releases ADP from DnaK; ATP binding to DnaK triggers the release of the substrate protein, thus completing the reaction cycle. Several rounds of ATP-dependent interactions between DnaJ, DnaK and GrpE are required for fully efficient folding. Also involved, together with DnaK and GrpE, in the DNA replication of plasmids through activation of initiation proteins.</text>
</comment>
<comment type="cofactor">
    <cofactor evidence="1">
        <name>Zn(2+)</name>
        <dbReference type="ChEBI" id="CHEBI:29105"/>
    </cofactor>
    <text evidence="1">Binds 2 Zn(2+) ions per monomer.</text>
</comment>
<comment type="subunit">
    <text evidence="1">Homodimer.</text>
</comment>
<comment type="subcellular location">
    <subcellularLocation>
        <location evidence="1">Cytoplasm</location>
    </subcellularLocation>
</comment>
<comment type="domain">
    <text evidence="1">The J domain is necessary and sufficient to stimulate DnaK ATPase activity. Zinc center 1 plays an important role in the autonomous, DnaK-independent chaperone activity of DnaJ. Zinc center 2 is essential for interaction with DnaK and for DnaJ activity.</text>
</comment>
<comment type="similarity">
    <text evidence="1">Belongs to the DnaJ family.</text>
</comment>
<evidence type="ECO:0000255" key="1">
    <source>
        <dbReference type="HAMAP-Rule" id="MF_01152"/>
    </source>
</evidence>
<proteinExistence type="inferred from homology"/>
<feature type="chain" id="PRO_1000085187" description="Chaperone protein DnaJ">
    <location>
        <begin position="1"/>
        <end position="376"/>
    </location>
</feature>
<feature type="domain" description="J" evidence="1">
    <location>
        <begin position="5"/>
        <end position="70"/>
    </location>
</feature>
<feature type="repeat" description="CXXCXGXG motif">
    <location>
        <begin position="144"/>
        <end position="151"/>
    </location>
</feature>
<feature type="repeat" description="CXXCXGXG motif">
    <location>
        <begin position="161"/>
        <end position="168"/>
    </location>
</feature>
<feature type="repeat" description="CXXCXGXG motif">
    <location>
        <begin position="183"/>
        <end position="190"/>
    </location>
</feature>
<feature type="repeat" description="CXXCXGXG motif">
    <location>
        <begin position="197"/>
        <end position="204"/>
    </location>
</feature>
<feature type="zinc finger region" description="CR-type" evidence="1">
    <location>
        <begin position="131"/>
        <end position="209"/>
    </location>
</feature>
<feature type="binding site" evidence="1">
    <location>
        <position position="144"/>
    </location>
    <ligand>
        <name>Zn(2+)</name>
        <dbReference type="ChEBI" id="CHEBI:29105"/>
        <label>1</label>
    </ligand>
</feature>
<feature type="binding site" evidence="1">
    <location>
        <position position="147"/>
    </location>
    <ligand>
        <name>Zn(2+)</name>
        <dbReference type="ChEBI" id="CHEBI:29105"/>
        <label>1</label>
    </ligand>
</feature>
<feature type="binding site" evidence="1">
    <location>
        <position position="161"/>
    </location>
    <ligand>
        <name>Zn(2+)</name>
        <dbReference type="ChEBI" id="CHEBI:29105"/>
        <label>2</label>
    </ligand>
</feature>
<feature type="binding site" evidence="1">
    <location>
        <position position="164"/>
    </location>
    <ligand>
        <name>Zn(2+)</name>
        <dbReference type="ChEBI" id="CHEBI:29105"/>
        <label>2</label>
    </ligand>
</feature>
<feature type="binding site" evidence="1">
    <location>
        <position position="183"/>
    </location>
    <ligand>
        <name>Zn(2+)</name>
        <dbReference type="ChEBI" id="CHEBI:29105"/>
        <label>2</label>
    </ligand>
</feature>
<feature type="binding site" evidence="1">
    <location>
        <position position="186"/>
    </location>
    <ligand>
        <name>Zn(2+)</name>
        <dbReference type="ChEBI" id="CHEBI:29105"/>
        <label>2</label>
    </ligand>
</feature>
<feature type="binding site" evidence="1">
    <location>
        <position position="197"/>
    </location>
    <ligand>
        <name>Zn(2+)</name>
        <dbReference type="ChEBI" id="CHEBI:29105"/>
        <label>1</label>
    </ligand>
</feature>
<feature type="binding site" evidence="1">
    <location>
        <position position="200"/>
    </location>
    <ligand>
        <name>Zn(2+)</name>
        <dbReference type="ChEBI" id="CHEBI:29105"/>
        <label>1</label>
    </ligand>
</feature>
<gene>
    <name evidence="1" type="primary">dnaJ</name>
    <name type="ordered locus">EcE24377A_0015</name>
</gene>
<organism>
    <name type="scientific">Escherichia coli O139:H28 (strain E24377A / ETEC)</name>
    <dbReference type="NCBI Taxonomy" id="331111"/>
    <lineage>
        <taxon>Bacteria</taxon>
        <taxon>Pseudomonadati</taxon>
        <taxon>Pseudomonadota</taxon>
        <taxon>Gammaproteobacteria</taxon>
        <taxon>Enterobacterales</taxon>
        <taxon>Enterobacteriaceae</taxon>
        <taxon>Escherichia</taxon>
    </lineage>
</organism>
<keyword id="KW-0143">Chaperone</keyword>
<keyword id="KW-0963">Cytoplasm</keyword>
<keyword id="KW-0235">DNA replication</keyword>
<keyword id="KW-0479">Metal-binding</keyword>
<keyword id="KW-1185">Reference proteome</keyword>
<keyword id="KW-0677">Repeat</keyword>
<keyword id="KW-0346">Stress response</keyword>
<keyword id="KW-0862">Zinc</keyword>
<keyword id="KW-0863">Zinc-finger</keyword>
<accession>A7ZHA5</accession>